<reference key="1">
    <citation type="journal article" date="2005" name="PLoS Biol.">
        <title>Major structural differences and novel potential virulence mechanisms from the genomes of multiple Campylobacter species.</title>
        <authorList>
            <person name="Fouts D.E."/>
            <person name="Mongodin E.F."/>
            <person name="Mandrell R.E."/>
            <person name="Miller W.G."/>
            <person name="Rasko D.A."/>
            <person name="Ravel J."/>
            <person name="Brinkac L.M."/>
            <person name="DeBoy R.T."/>
            <person name="Parker C.T."/>
            <person name="Daugherty S.C."/>
            <person name="Dodson R.J."/>
            <person name="Durkin A.S."/>
            <person name="Madupu R."/>
            <person name="Sullivan S.A."/>
            <person name="Shetty J.U."/>
            <person name="Ayodeji M.A."/>
            <person name="Shvartsbeyn A."/>
            <person name="Schatz M.C."/>
            <person name="Badger J.H."/>
            <person name="Fraser C.M."/>
            <person name="Nelson K.E."/>
        </authorList>
    </citation>
    <scope>NUCLEOTIDE SEQUENCE [LARGE SCALE GENOMIC DNA]</scope>
    <source>
        <strain>RM1221</strain>
    </source>
</reference>
<comment type="function">
    <text evidence="1">Catalyzes the condensation of the acetyl group of acetyl-CoA with 3-methyl-2-oxobutanoate (2-ketoisovalerate) to form 3-carboxy-3-hydroxy-4-methylpentanoate (2-isopropylmalate).</text>
</comment>
<comment type="catalytic activity">
    <reaction evidence="1">
        <text>3-methyl-2-oxobutanoate + acetyl-CoA + H2O = (2S)-2-isopropylmalate + CoA + H(+)</text>
        <dbReference type="Rhea" id="RHEA:21524"/>
        <dbReference type="ChEBI" id="CHEBI:1178"/>
        <dbReference type="ChEBI" id="CHEBI:11851"/>
        <dbReference type="ChEBI" id="CHEBI:15377"/>
        <dbReference type="ChEBI" id="CHEBI:15378"/>
        <dbReference type="ChEBI" id="CHEBI:57287"/>
        <dbReference type="ChEBI" id="CHEBI:57288"/>
        <dbReference type="EC" id="2.3.3.13"/>
    </reaction>
</comment>
<comment type="cofactor">
    <cofactor evidence="1">
        <name>Mn(2+)</name>
        <dbReference type="ChEBI" id="CHEBI:29035"/>
    </cofactor>
</comment>
<comment type="pathway">
    <text evidence="1">Amino-acid biosynthesis; L-leucine biosynthesis; L-leucine from 3-methyl-2-oxobutanoate: step 1/4.</text>
</comment>
<comment type="subunit">
    <text evidence="1">Homodimer.</text>
</comment>
<comment type="subcellular location">
    <subcellularLocation>
        <location evidence="1">Cytoplasm</location>
    </subcellularLocation>
</comment>
<comment type="similarity">
    <text evidence="1">Belongs to the alpha-IPM synthase/homocitrate synthase family. LeuA type 1 subfamily.</text>
</comment>
<dbReference type="EC" id="2.3.3.13" evidence="1"/>
<dbReference type="EMBL" id="CP000025">
    <property type="protein sequence ID" value="AAW34489.1"/>
    <property type="molecule type" value="Genomic_DNA"/>
</dbReference>
<dbReference type="RefSeq" id="WP_002867508.1">
    <property type="nucleotide sequence ID" value="NC_003912.7"/>
</dbReference>
<dbReference type="SMR" id="Q5HS76"/>
<dbReference type="KEGG" id="cjr:CJE1889"/>
<dbReference type="HOGENOM" id="CLU_022158_0_1_7"/>
<dbReference type="UniPathway" id="UPA00048">
    <property type="reaction ID" value="UER00070"/>
</dbReference>
<dbReference type="GO" id="GO:0005829">
    <property type="term" value="C:cytosol"/>
    <property type="evidence" value="ECO:0007669"/>
    <property type="project" value="TreeGrafter"/>
</dbReference>
<dbReference type="GO" id="GO:0003852">
    <property type="term" value="F:2-isopropylmalate synthase activity"/>
    <property type="evidence" value="ECO:0007669"/>
    <property type="project" value="UniProtKB-UniRule"/>
</dbReference>
<dbReference type="GO" id="GO:0003985">
    <property type="term" value="F:acetyl-CoA C-acetyltransferase activity"/>
    <property type="evidence" value="ECO:0007669"/>
    <property type="project" value="UniProtKB-UniRule"/>
</dbReference>
<dbReference type="GO" id="GO:0030145">
    <property type="term" value="F:manganese ion binding"/>
    <property type="evidence" value="ECO:0007669"/>
    <property type="project" value="UniProtKB-UniRule"/>
</dbReference>
<dbReference type="GO" id="GO:0009098">
    <property type="term" value="P:L-leucine biosynthetic process"/>
    <property type="evidence" value="ECO:0007669"/>
    <property type="project" value="UniProtKB-UniRule"/>
</dbReference>
<dbReference type="CDD" id="cd07940">
    <property type="entry name" value="DRE_TIM_IPMS"/>
    <property type="match status" value="1"/>
</dbReference>
<dbReference type="FunFam" id="1.10.238.260:FF:000001">
    <property type="entry name" value="2-isopropylmalate synthase"/>
    <property type="match status" value="1"/>
</dbReference>
<dbReference type="FunFam" id="3.20.20.70:FF:000010">
    <property type="entry name" value="2-isopropylmalate synthase"/>
    <property type="match status" value="1"/>
</dbReference>
<dbReference type="Gene3D" id="1.10.238.260">
    <property type="match status" value="1"/>
</dbReference>
<dbReference type="Gene3D" id="3.30.160.270">
    <property type="match status" value="1"/>
</dbReference>
<dbReference type="Gene3D" id="3.20.20.70">
    <property type="entry name" value="Aldolase class I"/>
    <property type="match status" value="1"/>
</dbReference>
<dbReference type="HAMAP" id="MF_01025">
    <property type="entry name" value="LeuA_type1"/>
    <property type="match status" value="1"/>
</dbReference>
<dbReference type="InterPro" id="IPR050073">
    <property type="entry name" value="2-IPM_HCS-like"/>
</dbReference>
<dbReference type="InterPro" id="IPR013709">
    <property type="entry name" value="2-isopropylmalate_synth_dimer"/>
</dbReference>
<dbReference type="InterPro" id="IPR002034">
    <property type="entry name" value="AIPM/Hcit_synth_CS"/>
</dbReference>
<dbReference type="InterPro" id="IPR013785">
    <property type="entry name" value="Aldolase_TIM"/>
</dbReference>
<dbReference type="InterPro" id="IPR054691">
    <property type="entry name" value="LeuA/HCS_post-cat"/>
</dbReference>
<dbReference type="InterPro" id="IPR036230">
    <property type="entry name" value="LeuA_allosteric_dom_sf"/>
</dbReference>
<dbReference type="InterPro" id="IPR005671">
    <property type="entry name" value="LeuA_bact_synth"/>
</dbReference>
<dbReference type="InterPro" id="IPR000891">
    <property type="entry name" value="PYR_CT"/>
</dbReference>
<dbReference type="NCBIfam" id="TIGR00973">
    <property type="entry name" value="leuA_bact"/>
    <property type="match status" value="1"/>
</dbReference>
<dbReference type="NCBIfam" id="NF002084">
    <property type="entry name" value="PRK00915.1-1"/>
    <property type="match status" value="1"/>
</dbReference>
<dbReference type="NCBIfam" id="NF002086">
    <property type="entry name" value="PRK00915.1-3"/>
    <property type="match status" value="1"/>
</dbReference>
<dbReference type="PANTHER" id="PTHR10277:SF9">
    <property type="entry name" value="2-ISOPROPYLMALATE SYNTHASE 1, CHLOROPLASTIC-RELATED"/>
    <property type="match status" value="1"/>
</dbReference>
<dbReference type="PANTHER" id="PTHR10277">
    <property type="entry name" value="HOMOCITRATE SYNTHASE-RELATED"/>
    <property type="match status" value="1"/>
</dbReference>
<dbReference type="Pfam" id="PF22617">
    <property type="entry name" value="HCS_D2"/>
    <property type="match status" value="1"/>
</dbReference>
<dbReference type="Pfam" id="PF00682">
    <property type="entry name" value="HMGL-like"/>
    <property type="match status" value="1"/>
</dbReference>
<dbReference type="Pfam" id="PF08502">
    <property type="entry name" value="LeuA_dimer"/>
    <property type="match status" value="1"/>
</dbReference>
<dbReference type="SMART" id="SM00917">
    <property type="entry name" value="LeuA_dimer"/>
    <property type="match status" value="1"/>
</dbReference>
<dbReference type="SUPFAM" id="SSF110921">
    <property type="entry name" value="2-isopropylmalate synthase LeuA, allosteric (dimerisation) domain"/>
    <property type="match status" value="1"/>
</dbReference>
<dbReference type="SUPFAM" id="SSF51569">
    <property type="entry name" value="Aldolase"/>
    <property type="match status" value="1"/>
</dbReference>
<dbReference type="PROSITE" id="PS00815">
    <property type="entry name" value="AIPM_HOMOCIT_SYNTH_1"/>
    <property type="match status" value="1"/>
</dbReference>
<dbReference type="PROSITE" id="PS00816">
    <property type="entry name" value="AIPM_HOMOCIT_SYNTH_2"/>
    <property type="match status" value="1"/>
</dbReference>
<dbReference type="PROSITE" id="PS50991">
    <property type="entry name" value="PYR_CT"/>
    <property type="match status" value="1"/>
</dbReference>
<keyword id="KW-0028">Amino-acid biosynthesis</keyword>
<keyword id="KW-0100">Branched-chain amino acid biosynthesis</keyword>
<keyword id="KW-0963">Cytoplasm</keyword>
<keyword id="KW-0432">Leucine biosynthesis</keyword>
<keyword id="KW-0464">Manganese</keyword>
<keyword id="KW-0479">Metal-binding</keyword>
<keyword id="KW-0808">Transferase</keyword>
<organism>
    <name type="scientific">Campylobacter jejuni (strain RM1221)</name>
    <dbReference type="NCBI Taxonomy" id="195099"/>
    <lineage>
        <taxon>Bacteria</taxon>
        <taxon>Pseudomonadati</taxon>
        <taxon>Campylobacterota</taxon>
        <taxon>Epsilonproteobacteria</taxon>
        <taxon>Campylobacterales</taxon>
        <taxon>Campylobacteraceae</taxon>
        <taxon>Campylobacter</taxon>
    </lineage>
</organism>
<name>LEU1_CAMJR</name>
<sequence length="511" mass="56368">MKDNKIIIFDTTLRDGEQALGSSLGINQKLQIALALENLGVDVIEAGFPVSSQGDFKAVQKIASKVKNSTICALSRALDKDIDMAYEALKVAKHFRIHTFIATSTLHMQDKLKKDFDEILSMAKRAIIRARSYTDDVEFSCEDAGRTPIDNLCFMVENAIKAGAKTINIPDTVGYTLPSEFANIIKILFNKVPNIDKAIISVHCHNDLGMATGNSLSAILQGARQIECTINGLGERAGNCALEEVVMAIKTRKDYLKGFYTDIKCENIFKTSKLVSAITNESIPSHKAIVGSNAFSHSSGIHQDGVLKNRQTYEIISPSAIGIHDNRMLMTARSGRAMIKTCLENLGYDENTYNLDDVYERFLRLADKKGQVYDYDLEALMFLSYENEEENEFVIEKLSVISGNIPTACVCMRIKEELKTEACTGNGPVEAVFNCIARITNLKPVLKAYSINAKSSGVDAQGQVDVDLEFKGRKFHGKGLSTDVIEASAQAFASAYNAIYRSLKVEERKMA</sequence>
<feature type="chain" id="PRO_1000149164" description="2-isopropylmalate synthase">
    <location>
        <begin position="1"/>
        <end position="511"/>
    </location>
</feature>
<feature type="domain" description="Pyruvate carboxyltransferase" evidence="1">
    <location>
        <begin position="6"/>
        <end position="269"/>
    </location>
</feature>
<feature type="region of interest" description="Regulatory domain" evidence="1">
    <location>
        <begin position="394"/>
        <end position="511"/>
    </location>
</feature>
<feature type="binding site" evidence="1">
    <location>
        <position position="15"/>
    </location>
    <ligand>
        <name>Mn(2+)</name>
        <dbReference type="ChEBI" id="CHEBI:29035"/>
    </ligand>
</feature>
<feature type="binding site" evidence="1">
    <location>
        <position position="203"/>
    </location>
    <ligand>
        <name>Mn(2+)</name>
        <dbReference type="ChEBI" id="CHEBI:29035"/>
    </ligand>
</feature>
<feature type="binding site" evidence="1">
    <location>
        <position position="205"/>
    </location>
    <ligand>
        <name>Mn(2+)</name>
        <dbReference type="ChEBI" id="CHEBI:29035"/>
    </ligand>
</feature>
<feature type="binding site" evidence="1">
    <location>
        <position position="239"/>
    </location>
    <ligand>
        <name>Mn(2+)</name>
        <dbReference type="ChEBI" id="CHEBI:29035"/>
    </ligand>
</feature>
<accession>Q5HS76</accession>
<evidence type="ECO:0000255" key="1">
    <source>
        <dbReference type="HAMAP-Rule" id="MF_01025"/>
    </source>
</evidence>
<gene>
    <name evidence="1" type="primary">leuA</name>
    <name type="ordered locus">CJE1889</name>
</gene>
<protein>
    <recommendedName>
        <fullName evidence="1">2-isopropylmalate synthase</fullName>
        <ecNumber evidence="1">2.3.3.13</ecNumber>
    </recommendedName>
    <alternativeName>
        <fullName evidence="1">Alpha-IPM synthase</fullName>
    </alternativeName>
    <alternativeName>
        <fullName evidence="1">Alpha-isopropylmalate synthase</fullName>
    </alternativeName>
</protein>
<proteinExistence type="inferred from homology"/>